<proteinExistence type="evidence at protein level"/>
<sequence length="115" mass="12921">MLSRIQNYTSGLVSKANLLSSKALYYGKVGAEISKQIYLKEGLQPPTVAQFKSVYSNLYKQSLNFALKPTEVLSCLKNIQKNELLKYGAYGIQLIGFYSVGEIIGRRKLVGYKHH</sequence>
<evidence type="ECO:0000250" key="1"/>
<evidence type="ECO:0000269" key="2">
    <source>
    </source>
</evidence>
<evidence type="ECO:0000305" key="3"/>
<evidence type="ECO:0007744" key="4">
    <source>
    </source>
</evidence>
<comment type="function">
    <text>Mitochondrial membrane ATP synthase (F(1)F(0) ATP synthase or Complex V) produces ATP from ADP in the presence of a proton gradient across the membrane which is generated by electron transport complexes of the respiratory chain. F-type ATPases consist of two structural domains, F(1) - containing the extramembraneous catalytic core, and F(0) - containing the membrane proton channel, linked together by a central stalk and a peripheral stalk. During catalysis, ATP synthesis in the catalytic domain of F(1) is coupled via a rotary mechanism of the central stalk subunits to proton translocation. Part of the complex F(0) domain. Minor subunit located with subunit a in the membrane.</text>
</comment>
<comment type="subunit">
    <text>F-type ATPases have 2 components, CF(1) - the catalytic core - and CF(0) - the membrane proton channel. In yeast, the dimeric form of ATP synthase consists of 17 polypeptides: alpha, beta, gamma, delta, epsilon, 4 (B), 5 (OSCP), 6 (A), 8, 9 (C), d, E (Tim11), f, g, h, i/j and k.</text>
</comment>
<comment type="subcellular location">
    <subcellularLocation>
        <location evidence="1">Mitochondrion membrane</location>
    </subcellularLocation>
</comment>
<comment type="PTM">
    <text>Phosphorylation on Ser-62 impairs ATP synthase dimerization.</text>
</comment>
<comment type="similarity">
    <text evidence="3">Belongs to the ATPase g subunit family.</text>
</comment>
<protein>
    <recommendedName>
        <fullName>ATP synthase subunit g, mitochondrial</fullName>
        <shortName>ATPase subunit g</shortName>
    </recommendedName>
</protein>
<organism>
    <name type="scientific">Saccharomyces cerevisiae (strain ATCC 204508 / S288c)</name>
    <name type="common">Baker's yeast</name>
    <dbReference type="NCBI Taxonomy" id="559292"/>
    <lineage>
        <taxon>Eukaryota</taxon>
        <taxon>Fungi</taxon>
        <taxon>Dikarya</taxon>
        <taxon>Ascomycota</taxon>
        <taxon>Saccharomycotina</taxon>
        <taxon>Saccharomycetes</taxon>
        <taxon>Saccharomycetales</taxon>
        <taxon>Saccharomycetaceae</taxon>
        <taxon>Saccharomyces</taxon>
    </lineage>
</organism>
<gene>
    <name type="primary">ATP20</name>
    <name type="ordered locus">YPR020W</name>
    <name type="ORF">YP9531.14</name>
</gene>
<accession>Q12233</accession>
<accession>D6W430</accession>
<keyword id="KW-0007">Acetylation</keyword>
<keyword id="KW-0066">ATP synthesis</keyword>
<keyword id="KW-0138">CF(0)</keyword>
<keyword id="KW-0903">Direct protein sequencing</keyword>
<keyword id="KW-0375">Hydrogen ion transport</keyword>
<keyword id="KW-0406">Ion transport</keyword>
<keyword id="KW-0472">Membrane</keyword>
<keyword id="KW-0496">Mitochondrion</keyword>
<keyword id="KW-0597">Phosphoprotein</keyword>
<keyword id="KW-1185">Reference proteome</keyword>
<keyword id="KW-0813">Transport</keyword>
<feature type="chain" id="PRO_0000071696" description="ATP synthase subunit g, mitochondrial">
    <location>
        <begin position="1"/>
        <end position="115"/>
    </location>
</feature>
<feature type="modified residue" description="N-acetylmethionine" evidence="4">
    <location>
        <position position="1"/>
    </location>
</feature>
<feature type="modified residue" description="Phosphoserine" evidence="4">
    <location>
        <position position="3"/>
    </location>
</feature>
<feature type="modified residue" description="Phosphoserine" evidence="4">
    <location>
        <position position="62"/>
    </location>
</feature>
<feature type="mutagenesis site" description="No effect on ATP synthase dimerization." evidence="2">
    <original>S</original>
    <variation>A</variation>
    <location>
        <position position="62"/>
    </location>
</feature>
<feature type="mutagenesis site" description="Inhibits ATP synthase dimerization." evidence="2">
    <original>S</original>
    <variation>E</variation>
    <location>
        <position position="62"/>
    </location>
</feature>
<name>ATPN_YEAST</name>
<dbReference type="EMBL" id="Z71255">
    <property type="protein sequence ID" value="CAA95016.1"/>
    <property type="molecule type" value="Genomic_DNA"/>
</dbReference>
<dbReference type="EMBL" id="Z49919">
    <property type="protein sequence ID" value="CAA90165.1"/>
    <property type="molecule type" value="Genomic_DNA"/>
</dbReference>
<dbReference type="EMBL" id="AY692980">
    <property type="protein sequence ID" value="AAT92999.1"/>
    <property type="molecule type" value="Genomic_DNA"/>
</dbReference>
<dbReference type="EMBL" id="BK006949">
    <property type="protein sequence ID" value="DAA11446.1"/>
    <property type="molecule type" value="Genomic_DNA"/>
</dbReference>
<dbReference type="PIR" id="S57554">
    <property type="entry name" value="S57554"/>
</dbReference>
<dbReference type="RefSeq" id="NP_015345.1">
    <property type="nucleotide sequence ID" value="NM_001184117.1"/>
</dbReference>
<dbReference type="SMR" id="Q12233"/>
<dbReference type="BioGRID" id="36197">
    <property type="interactions" value="144"/>
</dbReference>
<dbReference type="ComplexPortal" id="CPX-3281">
    <property type="entry name" value="Mitochondrial proton-transporting ATP synthase complex"/>
</dbReference>
<dbReference type="DIP" id="DIP-1207N"/>
<dbReference type="FunCoup" id="Q12233">
    <property type="interactions" value="161"/>
</dbReference>
<dbReference type="IntAct" id="Q12233">
    <property type="interactions" value="19"/>
</dbReference>
<dbReference type="MINT" id="Q12233"/>
<dbReference type="STRING" id="4932.YPR020W"/>
<dbReference type="iPTMnet" id="Q12233"/>
<dbReference type="PaxDb" id="4932-YPR020W"/>
<dbReference type="PeptideAtlas" id="Q12233"/>
<dbReference type="TopDownProteomics" id="Q12233"/>
<dbReference type="EnsemblFungi" id="YPR020W_mRNA">
    <property type="protein sequence ID" value="YPR020W"/>
    <property type="gene ID" value="YPR020W"/>
</dbReference>
<dbReference type="GeneID" id="856131"/>
<dbReference type="KEGG" id="sce:YPR020W"/>
<dbReference type="AGR" id="SGD:S000006224"/>
<dbReference type="SGD" id="S000006224">
    <property type="gene designation" value="ATP20"/>
</dbReference>
<dbReference type="VEuPathDB" id="FungiDB:YPR020W"/>
<dbReference type="eggNOG" id="KOG4103">
    <property type="taxonomic scope" value="Eukaryota"/>
</dbReference>
<dbReference type="GeneTree" id="ENSGT00390000009724"/>
<dbReference type="HOGENOM" id="CLU_083674_1_0_1"/>
<dbReference type="InParanoid" id="Q12233"/>
<dbReference type="OMA" id="CAQAYLN"/>
<dbReference type="OrthoDB" id="437at2759"/>
<dbReference type="BioCyc" id="YEAST:G3O-34180-MONOMER"/>
<dbReference type="Reactome" id="R-SCE-9837999">
    <property type="pathway name" value="Mitochondrial protein degradation"/>
</dbReference>
<dbReference type="BioGRID-ORCS" id="856131">
    <property type="hits" value="0 hits in 10 CRISPR screens"/>
</dbReference>
<dbReference type="PRO" id="PR:Q12233"/>
<dbReference type="Proteomes" id="UP000002311">
    <property type="component" value="Chromosome XVI"/>
</dbReference>
<dbReference type="RNAct" id="Q12233">
    <property type="molecule type" value="protein"/>
</dbReference>
<dbReference type="GO" id="GO:0005743">
    <property type="term" value="C:mitochondrial inner membrane"/>
    <property type="evidence" value="ECO:0000314"/>
    <property type="project" value="ComplexPortal"/>
</dbReference>
<dbReference type="GO" id="GO:0005739">
    <property type="term" value="C:mitochondrion"/>
    <property type="evidence" value="ECO:0000315"/>
    <property type="project" value="SGD"/>
</dbReference>
<dbReference type="GO" id="GO:0045259">
    <property type="term" value="C:proton-transporting ATP synthase complex"/>
    <property type="evidence" value="ECO:0000315"/>
    <property type="project" value="SGD"/>
</dbReference>
<dbReference type="GO" id="GO:0015078">
    <property type="term" value="F:proton transmembrane transporter activity"/>
    <property type="evidence" value="ECO:0007669"/>
    <property type="project" value="InterPro"/>
</dbReference>
<dbReference type="GO" id="GO:0042407">
    <property type="term" value="P:cristae formation"/>
    <property type="evidence" value="ECO:0000315"/>
    <property type="project" value="SGD"/>
</dbReference>
<dbReference type="GO" id="GO:0065003">
    <property type="term" value="P:protein-containing complex assembly"/>
    <property type="evidence" value="ECO:0000315"/>
    <property type="project" value="SGD"/>
</dbReference>
<dbReference type="GO" id="GO:0015986">
    <property type="term" value="P:proton motive force-driven ATP synthesis"/>
    <property type="evidence" value="ECO:0000314"/>
    <property type="project" value="ComplexPortal"/>
</dbReference>
<dbReference type="InterPro" id="IPR006808">
    <property type="entry name" value="ATP_synth_F0_gsu_mt"/>
</dbReference>
<dbReference type="Pfam" id="PF04718">
    <property type="entry name" value="ATP-synt_G"/>
    <property type="match status" value="1"/>
</dbReference>
<reference key="1">
    <citation type="journal article" date="1997" name="Nature">
        <title>The nucleotide sequence of Saccharomyces cerevisiae chromosome XVI.</title>
        <authorList>
            <person name="Bussey H."/>
            <person name="Storms R.K."/>
            <person name="Ahmed A."/>
            <person name="Albermann K."/>
            <person name="Allen E."/>
            <person name="Ansorge W."/>
            <person name="Araujo R."/>
            <person name="Aparicio A."/>
            <person name="Barrell B.G."/>
            <person name="Badcock K."/>
            <person name="Benes V."/>
            <person name="Botstein D."/>
            <person name="Bowman S."/>
            <person name="Brueckner M."/>
            <person name="Carpenter J."/>
            <person name="Cherry J.M."/>
            <person name="Chung E."/>
            <person name="Churcher C.M."/>
            <person name="Coster F."/>
            <person name="Davis K."/>
            <person name="Davis R.W."/>
            <person name="Dietrich F.S."/>
            <person name="Delius H."/>
            <person name="DiPaolo T."/>
            <person name="Dubois E."/>
            <person name="Duesterhoeft A."/>
            <person name="Duncan M."/>
            <person name="Floeth M."/>
            <person name="Fortin N."/>
            <person name="Friesen J.D."/>
            <person name="Fritz C."/>
            <person name="Goffeau A."/>
            <person name="Hall J."/>
            <person name="Hebling U."/>
            <person name="Heumann K."/>
            <person name="Hilbert H."/>
            <person name="Hillier L.W."/>
            <person name="Hunicke-Smith S."/>
            <person name="Hyman R.W."/>
            <person name="Johnston M."/>
            <person name="Kalman S."/>
            <person name="Kleine K."/>
            <person name="Komp C."/>
            <person name="Kurdi O."/>
            <person name="Lashkari D."/>
            <person name="Lew H."/>
            <person name="Lin A."/>
            <person name="Lin D."/>
            <person name="Louis E.J."/>
            <person name="Marathe R."/>
            <person name="Messenguy F."/>
            <person name="Mewes H.-W."/>
            <person name="Mirtipati S."/>
            <person name="Moestl D."/>
            <person name="Mueller-Auer S."/>
            <person name="Namath A."/>
            <person name="Nentwich U."/>
            <person name="Oefner P."/>
            <person name="Pearson D."/>
            <person name="Petel F.X."/>
            <person name="Pohl T.M."/>
            <person name="Purnelle B."/>
            <person name="Rajandream M.A."/>
            <person name="Rechmann S."/>
            <person name="Rieger M."/>
            <person name="Riles L."/>
            <person name="Roberts D."/>
            <person name="Schaefer M."/>
            <person name="Scharfe M."/>
            <person name="Scherens B."/>
            <person name="Schramm S."/>
            <person name="Schroeder M."/>
            <person name="Sdicu A.-M."/>
            <person name="Tettelin H."/>
            <person name="Urrestarazu L.A."/>
            <person name="Ushinsky S."/>
            <person name="Vierendeels F."/>
            <person name="Vissers S."/>
            <person name="Voss H."/>
            <person name="Walsh S.V."/>
            <person name="Wambutt R."/>
            <person name="Wang Y."/>
            <person name="Wedler E."/>
            <person name="Wedler H."/>
            <person name="Winnett E."/>
            <person name="Zhong W.-W."/>
            <person name="Zollner A."/>
            <person name="Vo D.H."/>
            <person name="Hani J."/>
        </authorList>
    </citation>
    <scope>NUCLEOTIDE SEQUENCE [LARGE SCALE GENOMIC DNA]</scope>
    <source>
        <strain>ATCC 204508 / S288c</strain>
    </source>
</reference>
<reference key="2">
    <citation type="journal article" date="2014" name="G3 (Bethesda)">
        <title>The reference genome sequence of Saccharomyces cerevisiae: Then and now.</title>
        <authorList>
            <person name="Engel S.R."/>
            <person name="Dietrich F.S."/>
            <person name="Fisk D.G."/>
            <person name="Binkley G."/>
            <person name="Balakrishnan R."/>
            <person name="Costanzo M.C."/>
            <person name="Dwight S.S."/>
            <person name="Hitz B.C."/>
            <person name="Karra K."/>
            <person name="Nash R.S."/>
            <person name="Weng S."/>
            <person name="Wong E.D."/>
            <person name="Lloyd P."/>
            <person name="Skrzypek M.S."/>
            <person name="Miyasato S.R."/>
            <person name="Simison M."/>
            <person name="Cherry J.M."/>
        </authorList>
    </citation>
    <scope>GENOME REANNOTATION</scope>
    <source>
        <strain>ATCC 204508 / S288c</strain>
    </source>
</reference>
<reference key="3">
    <citation type="journal article" date="2007" name="Genome Res.">
        <title>Approaching a complete repository of sequence-verified protein-encoding clones for Saccharomyces cerevisiae.</title>
        <authorList>
            <person name="Hu Y."/>
            <person name="Rolfs A."/>
            <person name="Bhullar B."/>
            <person name="Murthy T.V.S."/>
            <person name="Zhu C."/>
            <person name="Berger M.F."/>
            <person name="Camargo A.A."/>
            <person name="Kelley F."/>
            <person name="McCarron S."/>
            <person name="Jepson D."/>
            <person name="Richardson A."/>
            <person name="Raphael J."/>
            <person name="Moreira D."/>
            <person name="Taycher E."/>
            <person name="Zuo D."/>
            <person name="Mohr S."/>
            <person name="Kane M.F."/>
            <person name="Williamson J."/>
            <person name="Simpson A.J.G."/>
            <person name="Bulyk M.L."/>
            <person name="Harlow E."/>
            <person name="Marsischky G."/>
            <person name="Kolodner R.D."/>
            <person name="LaBaer J."/>
        </authorList>
    </citation>
    <scope>NUCLEOTIDE SEQUENCE [GENOMIC DNA]</scope>
    <source>
        <strain>ATCC 204508 / S288c</strain>
    </source>
</reference>
<reference key="4">
    <citation type="journal article" date="1998" name="EMBO J.">
        <title>Yeast mitochondrial F1F0-ATPase exists as a dimer: identification of three dimer-specific subunits.</title>
        <authorList>
            <person name="Arnold I."/>
            <person name="Pfeiffer K."/>
            <person name="Neupert W."/>
            <person name="Stuart R.A."/>
            <person name="Schaegger H."/>
        </authorList>
    </citation>
    <scope>IDENTIFICATION</scope>
    <scope>PROTEIN SEQUENCE OF 1-13</scope>
    <scope>MUTAGENESIS OF SER-62</scope>
    <source>
        <strain>ATCC 208353 / W303-1A</strain>
    </source>
</reference>
<reference key="5">
    <citation type="journal article" date="2007" name="Mol. Cell. Proteomics">
        <title>Profiling phosphoproteins of yeast mitochondria reveals a role of phosphorylation in assembly of the ATP synthase.</title>
        <authorList>
            <person name="Reinders J."/>
            <person name="Wagner K."/>
            <person name="Zahedi R.P."/>
            <person name="Stojanovski D."/>
            <person name="Eyrich B."/>
            <person name="van der Laan M."/>
            <person name="Rehling P."/>
            <person name="Sickmann A."/>
            <person name="Pfanner N."/>
            <person name="Meisinger C."/>
        </authorList>
    </citation>
    <scope>ACETYLATION [LARGE SCALE ANALYSIS] AT MET-1</scope>
    <scope>PHOSPHORYLATION [LARGE SCALE ANALYSIS] AT SER-3 AND SER-62</scope>
    <scope>IDENTIFICATION BY MASS SPECTROMETRY [LARGE SCALE ANALYSIS]</scope>
    <source>
        <strain>ATCC 76625 / YPH499</strain>
    </source>
</reference>